<dbReference type="EMBL" id="Z35927">
    <property type="status" value="NOT_ANNOTATED_CDS"/>
    <property type="molecule type" value="Genomic_DNA"/>
</dbReference>
<dbReference type="EMBL" id="BK006936">
    <property type="protein sequence ID" value="DAA07178.1"/>
    <property type="molecule type" value="Genomic_DNA"/>
</dbReference>
<dbReference type="RefSeq" id="NP_116327.3">
    <property type="nucleotide sequence ID" value="NM_001184442.3"/>
</dbReference>
<dbReference type="PDB" id="8C80">
    <property type="method" value="EM"/>
    <property type="resolution" value="3.40 A"/>
    <property type="chains" value="D=1-80"/>
</dbReference>
<dbReference type="PDB" id="8C81">
    <property type="method" value="EM"/>
    <property type="resolution" value="3.30 A"/>
    <property type="chains" value="D=1-80"/>
</dbReference>
<dbReference type="PDB" id="8C82">
    <property type="method" value="EM"/>
    <property type="resolution" value="3.40 A"/>
    <property type="chains" value="D/H=1-80"/>
</dbReference>
<dbReference type="PDB" id="8IAJ">
    <property type="method" value="EM"/>
    <property type="resolution" value="3.10 A"/>
    <property type="chains" value="C/G=1-80"/>
</dbReference>
<dbReference type="PDB" id="8IAK">
    <property type="method" value="EM"/>
    <property type="resolution" value="3.10 A"/>
    <property type="chains" value="C/G=1-80"/>
</dbReference>
<dbReference type="PDB" id="8IAM">
    <property type="method" value="EM"/>
    <property type="resolution" value="3.10 A"/>
    <property type="chains" value="C/G=1-80"/>
</dbReference>
<dbReference type="PDB" id="8QOF">
    <property type="method" value="EM"/>
    <property type="resolution" value="3.30 A"/>
    <property type="chains" value="D/H=1-80"/>
</dbReference>
<dbReference type="PDB" id="8QOG">
    <property type="method" value="EM"/>
    <property type="resolution" value="3.10 A"/>
    <property type="chains" value="D=1-80"/>
</dbReference>
<dbReference type="PDBsum" id="8C80"/>
<dbReference type="PDBsum" id="8C81"/>
<dbReference type="PDBsum" id="8C82"/>
<dbReference type="PDBsum" id="8IAJ"/>
<dbReference type="PDBsum" id="8IAK"/>
<dbReference type="PDBsum" id="8IAM"/>
<dbReference type="PDBsum" id="8QOF"/>
<dbReference type="PDBsum" id="8QOG"/>
<dbReference type="EMDB" id="EMD-16467"/>
<dbReference type="EMDB" id="EMD-16468"/>
<dbReference type="EMDB" id="EMD-16469"/>
<dbReference type="EMDB" id="EMD-18536"/>
<dbReference type="EMDB" id="EMD-18537"/>
<dbReference type="EMDB" id="EMD-35304"/>
<dbReference type="EMDB" id="EMD-35306"/>
<dbReference type="EMDB" id="EMD-35310"/>
<dbReference type="SMR" id="Q3E790"/>
<dbReference type="BioGRID" id="32762">
    <property type="interactions" value="288"/>
</dbReference>
<dbReference type="ComplexPortal" id="CPX-3158">
    <property type="entry name" value="SPOTS complex"/>
</dbReference>
<dbReference type="DIP" id="DIP-47347N"/>
<dbReference type="FunCoup" id="Q3E790">
    <property type="interactions" value="8"/>
</dbReference>
<dbReference type="IntAct" id="Q3E790">
    <property type="interactions" value="4"/>
</dbReference>
<dbReference type="STRING" id="4932.YBR058C-A"/>
<dbReference type="iPTMnet" id="Q3E790"/>
<dbReference type="PaxDb" id="4932-YBR058C-A"/>
<dbReference type="PeptideAtlas" id="Q3E790"/>
<dbReference type="EnsemblFungi" id="YBR058C-A_mRNA">
    <property type="protein sequence ID" value="YBR058C-A"/>
    <property type="gene ID" value="YBR058C-A"/>
</dbReference>
<dbReference type="GeneID" id="852350"/>
<dbReference type="KEGG" id="sce:YBR058C-A"/>
<dbReference type="AGR" id="SGD:S000007521"/>
<dbReference type="SGD" id="S000007521">
    <property type="gene designation" value="TSC3"/>
</dbReference>
<dbReference type="VEuPathDB" id="FungiDB:YBR058C-A"/>
<dbReference type="eggNOG" id="ENOG502S91C">
    <property type="taxonomic scope" value="Eukaryota"/>
</dbReference>
<dbReference type="HOGENOM" id="CLU_176405_0_0_1"/>
<dbReference type="InParanoid" id="Q3E790"/>
<dbReference type="OMA" id="YYVHLPF"/>
<dbReference type="OrthoDB" id="4065448at2759"/>
<dbReference type="BioCyc" id="YEAST:G3O-29249-MONOMER"/>
<dbReference type="BioGRID-ORCS" id="852350">
    <property type="hits" value="0 hits in 10 CRISPR screens"/>
</dbReference>
<dbReference type="PRO" id="PR:Q3E790"/>
<dbReference type="Proteomes" id="UP000002311">
    <property type="component" value="Chromosome II"/>
</dbReference>
<dbReference type="RNAct" id="Q3E790">
    <property type="molecule type" value="protein"/>
</dbReference>
<dbReference type="GO" id="GO:0005783">
    <property type="term" value="C:endoplasmic reticulum"/>
    <property type="evidence" value="ECO:0007005"/>
    <property type="project" value="SGD"/>
</dbReference>
<dbReference type="GO" id="GO:0005789">
    <property type="term" value="C:endoplasmic reticulum membrane"/>
    <property type="evidence" value="ECO:0007669"/>
    <property type="project" value="UniProtKB-SubCell"/>
</dbReference>
<dbReference type="GO" id="GO:0017059">
    <property type="term" value="C:serine palmitoyltransferase complex"/>
    <property type="evidence" value="ECO:0000314"/>
    <property type="project" value="UniProtKB"/>
</dbReference>
<dbReference type="GO" id="GO:0008047">
    <property type="term" value="F:enzyme activator activity"/>
    <property type="evidence" value="ECO:0000314"/>
    <property type="project" value="SGD"/>
</dbReference>
<dbReference type="GO" id="GO:0006666">
    <property type="term" value="P:3-keto-sphinganine metabolic process"/>
    <property type="evidence" value="ECO:0000353"/>
    <property type="project" value="SGD"/>
</dbReference>
<dbReference type="GO" id="GO:0090156">
    <property type="term" value="P:intracellular sphingolipid homeostasis"/>
    <property type="evidence" value="ECO:0000303"/>
    <property type="project" value="ComplexPortal"/>
</dbReference>
<dbReference type="GO" id="GO:0090154">
    <property type="term" value="P:positive regulation of sphingolipid biosynthetic process"/>
    <property type="evidence" value="ECO:0000315"/>
    <property type="project" value="SGD"/>
</dbReference>
<proteinExistence type="evidence at protein level"/>
<keyword id="KW-0002">3D-structure</keyword>
<keyword id="KW-0256">Endoplasmic reticulum</keyword>
<keyword id="KW-0443">Lipid metabolism</keyword>
<keyword id="KW-0472">Membrane</keyword>
<keyword id="KW-1185">Reference proteome</keyword>
<keyword id="KW-0746">Sphingolipid metabolism</keyword>
<keyword id="KW-0812">Transmembrane</keyword>
<keyword id="KW-1133">Transmembrane helix</keyword>
<protein>
    <recommendedName>
        <fullName>Serine palmitoyltransferase-regulating protein TSC3</fullName>
    </recommendedName>
    <alternativeName>
        <fullName>Temperature-sensitive CSG2-mutant suppressor protein 3</fullName>
    </alternativeName>
</protein>
<gene>
    <name type="primary">TSC3</name>
    <name type="ordered locus">YBR058C-A</name>
</gene>
<sequence>MTQHKSSMVYIPTTKEAKRRNGKSEGILNTIEEVVEKLYWTYYIHLPFYLMASFDSFFLHVFFLTIFSLSFFGILKYCFL</sequence>
<reference key="1">
    <citation type="journal article" date="1994" name="EMBO J.">
        <title>Complete DNA sequence of yeast chromosome II.</title>
        <authorList>
            <person name="Feldmann H."/>
            <person name="Aigle M."/>
            <person name="Aljinovic G."/>
            <person name="Andre B."/>
            <person name="Baclet M.C."/>
            <person name="Barthe C."/>
            <person name="Baur A."/>
            <person name="Becam A.-M."/>
            <person name="Biteau N."/>
            <person name="Boles E."/>
            <person name="Brandt T."/>
            <person name="Brendel M."/>
            <person name="Brueckner M."/>
            <person name="Bussereau F."/>
            <person name="Christiansen C."/>
            <person name="Contreras R."/>
            <person name="Crouzet M."/>
            <person name="Cziepluch C."/>
            <person name="Demolis N."/>
            <person name="Delaveau T."/>
            <person name="Doignon F."/>
            <person name="Domdey H."/>
            <person name="Duesterhus S."/>
            <person name="Dubois E."/>
            <person name="Dujon B."/>
            <person name="El Bakkoury M."/>
            <person name="Entian K.-D."/>
            <person name="Feuermann M."/>
            <person name="Fiers W."/>
            <person name="Fobo G.M."/>
            <person name="Fritz C."/>
            <person name="Gassenhuber J."/>
            <person name="Glansdorff N."/>
            <person name="Goffeau A."/>
            <person name="Grivell L.A."/>
            <person name="de Haan M."/>
            <person name="Hein C."/>
            <person name="Herbert C.J."/>
            <person name="Hollenberg C.P."/>
            <person name="Holmstroem K."/>
            <person name="Jacq C."/>
            <person name="Jacquet M."/>
            <person name="Jauniaux J.-C."/>
            <person name="Jonniaux J.-L."/>
            <person name="Kallesoee T."/>
            <person name="Kiesau P."/>
            <person name="Kirchrath L."/>
            <person name="Koetter P."/>
            <person name="Korol S."/>
            <person name="Liebl S."/>
            <person name="Logghe M."/>
            <person name="Lohan A.J.E."/>
            <person name="Louis E.J."/>
            <person name="Li Z.Y."/>
            <person name="Maat M.J."/>
            <person name="Mallet L."/>
            <person name="Mannhaupt G."/>
            <person name="Messenguy F."/>
            <person name="Miosga T."/>
            <person name="Molemans F."/>
            <person name="Mueller S."/>
            <person name="Nasr F."/>
            <person name="Obermaier B."/>
            <person name="Perea J."/>
            <person name="Pierard A."/>
            <person name="Piravandi E."/>
            <person name="Pohl F.M."/>
            <person name="Pohl T.M."/>
            <person name="Potier S."/>
            <person name="Proft M."/>
            <person name="Purnelle B."/>
            <person name="Ramezani Rad M."/>
            <person name="Rieger M."/>
            <person name="Rose M."/>
            <person name="Schaaff-Gerstenschlaeger I."/>
            <person name="Scherens B."/>
            <person name="Schwarzlose C."/>
            <person name="Skala J."/>
            <person name="Slonimski P.P."/>
            <person name="Smits P.H.M."/>
            <person name="Souciet J.-L."/>
            <person name="Steensma H.Y."/>
            <person name="Stucka R."/>
            <person name="Urrestarazu L.A."/>
            <person name="van der Aart Q.J.M."/>
            <person name="Van Dyck L."/>
            <person name="Vassarotti A."/>
            <person name="Vetter I."/>
            <person name="Vierendeels F."/>
            <person name="Vissers S."/>
            <person name="Wagner G."/>
            <person name="de Wergifosse P."/>
            <person name="Wolfe K.H."/>
            <person name="Zagulski M."/>
            <person name="Zimmermann F.K."/>
            <person name="Mewes H.-W."/>
            <person name="Kleine K."/>
        </authorList>
    </citation>
    <scope>NUCLEOTIDE SEQUENCE [LARGE SCALE GENOMIC DNA]</scope>
    <source>
        <strain>ATCC 204508 / S288c</strain>
    </source>
</reference>
<reference key="2">
    <citation type="journal article" date="2014" name="G3 (Bethesda)">
        <title>The reference genome sequence of Saccharomyces cerevisiae: Then and now.</title>
        <authorList>
            <person name="Engel S.R."/>
            <person name="Dietrich F.S."/>
            <person name="Fisk D.G."/>
            <person name="Binkley G."/>
            <person name="Balakrishnan R."/>
            <person name="Costanzo M.C."/>
            <person name="Dwight S.S."/>
            <person name="Hitz B.C."/>
            <person name="Karra K."/>
            <person name="Nash R.S."/>
            <person name="Weng S."/>
            <person name="Wong E.D."/>
            <person name="Lloyd P."/>
            <person name="Skrzypek M.S."/>
            <person name="Miyasato S.R."/>
            <person name="Simison M."/>
            <person name="Cherry J.M."/>
        </authorList>
    </citation>
    <scope>GENOME REANNOTATION</scope>
    <source>
        <strain>ATCC 204508 / S288c</strain>
    </source>
</reference>
<reference key="3">
    <citation type="journal article" date="2000" name="J. Biol. Chem.">
        <title>Tsc3p is an 80-amino acid protein associated with serine palmitoyltransferase and required for optimal enzyme activity.</title>
        <authorList>
            <person name="Gable K."/>
            <person name="Slife H."/>
            <person name="Bacikova D."/>
            <person name="Monaghan E."/>
            <person name="Dunn T.M."/>
        </authorList>
    </citation>
    <scope>INTERACTION WITH LCB1 AND LCB2</scope>
    <scope>SUBCELLULAR LOCATION</scope>
</reference>
<reference key="4">
    <citation type="journal article" date="2003" name="Nature">
        <title>Global analysis of protein localization in budding yeast.</title>
        <authorList>
            <person name="Huh W.-K."/>
            <person name="Falvo J.V."/>
            <person name="Gerke L.C."/>
            <person name="Carroll A.S."/>
            <person name="Howson R.W."/>
            <person name="Weissman J.S."/>
            <person name="O'Shea E.K."/>
        </authorList>
    </citation>
    <scope>SUBCELLULAR LOCATION [LARGE SCALE ANALYSIS]</scope>
</reference>
<reference key="5">
    <citation type="journal article" date="2010" name="Nature">
        <title>Orm family proteins mediate sphingolipid homeostasis.</title>
        <authorList>
            <person name="Breslow D.K."/>
            <person name="Collins S.R."/>
            <person name="Bodenmiller B."/>
            <person name="Aebersold R."/>
            <person name="Simons K."/>
            <person name="Shevchenko A."/>
            <person name="Ejsing C.S."/>
            <person name="Weissman J.S."/>
        </authorList>
    </citation>
    <scope>IDENTIFICATION IN THE SPOTS COMPLEX</scope>
</reference>
<reference evidence="6" key="6">
    <citation type="journal article" date="2024" name="J. Lipid Res.">
        <title>Orm proteins control ceramide synthesis and endocytosis via LCB-mediated Ypk1 regulation.</title>
        <authorList>
            <person name="Ren J."/>
            <person name="Rieger R."/>
            <person name="Pereira de Sa N."/>
            <person name="Kelapire D."/>
            <person name="Del Poeta M."/>
            <person name="Hannun Y.A."/>
        </authorList>
    </citation>
    <scope>FUNCTION</scope>
    <scope>DISRUPTION PHENOTYPE</scope>
</reference>
<feature type="chain" id="PRO_0000076358" description="Serine palmitoyltransferase-regulating protein TSC3">
    <location>
        <begin position="1"/>
        <end position="80"/>
    </location>
</feature>
<feature type="transmembrane region" description="Helical" evidence="1">
    <location>
        <begin position="54"/>
        <end position="74"/>
    </location>
</feature>
<organism>
    <name type="scientific">Saccharomyces cerevisiae (strain ATCC 204508 / S288c)</name>
    <name type="common">Baker's yeast</name>
    <dbReference type="NCBI Taxonomy" id="559292"/>
    <lineage>
        <taxon>Eukaryota</taxon>
        <taxon>Fungi</taxon>
        <taxon>Dikarya</taxon>
        <taxon>Ascomycota</taxon>
        <taxon>Saccharomycotina</taxon>
        <taxon>Saccharomycetes</taxon>
        <taxon>Saccharomycetales</taxon>
        <taxon>Saccharomycetaceae</taxon>
        <taxon>Saccharomyces</taxon>
    </lineage>
</organism>
<name>TSC3_YEAST</name>
<accession>Q3E790</accession>
<accession>D6VQ58</accession>
<evidence type="ECO:0000255" key="1"/>
<evidence type="ECO:0000269" key="2">
    <source>
    </source>
</evidence>
<evidence type="ECO:0000269" key="3">
    <source>
    </source>
</evidence>
<evidence type="ECO:0000269" key="4">
    <source>
    </source>
</evidence>
<evidence type="ECO:0000269" key="5">
    <source>
    </source>
</evidence>
<evidence type="ECO:0000305" key="6"/>
<comment type="function">
    <text evidence="5">Stimulates the activity of serine palmitoyltransferase (SPT), and thus plays a role in the biosynthesis of sphingolipids.</text>
</comment>
<comment type="subunit">
    <text evidence="2 4">Interacts with the serine palmitoyltransferase complex LCB1-LCB2. Component of the SPOTS complex, at least composed of LCB1/2 (LCB1 and/or LCB2), ORM1/2 (ORM1 and/or ORM2), SAC1 and TSC3.</text>
</comment>
<comment type="subcellular location">
    <subcellularLocation>
        <location evidence="2 3">Endoplasmic reticulum membrane</location>
        <topology evidence="2 3">Single-pass membrane protein</topology>
    </subcellularLocation>
</comment>
<comment type="disruption phenotype">
    <text evidence="5">Lowers the level of total sphingolipids and increases the phosphorylation of YPK1 in the ORM1 and ORM2 double knockout background mutant.</text>
</comment>